<name>RLME_SALCH</name>
<dbReference type="EC" id="2.1.1.166" evidence="1"/>
<dbReference type="EMBL" id="AE017220">
    <property type="protein sequence ID" value="AAX67141.1"/>
    <property type="molecule type" value="Genomic_DNA"/>
</dbReference>
<dbReference type="RefSeq" id="WP_000145964.1">
    <property type="nucleotide sequence ID" value="NC_006905.1"/>
</dbReference>
<dbReference type="SMR" id="Q57JH1"/>
<dbReference type="KEGG" id="sec:SCH_3235"/>
<dbReference type="HOGENOM" id="CLU_009422_4_0_6"/>
<dbReference type="Proteomes" id="UP000000538">
    <property type="component" value="Chromosome"/>
</dbReference>
<dbReference type="GO" id="GO:0005737">
    <property type="term" value="C:cytoplasm"/>
    <property type="evidence" value="ECO:0007669"/>
    <property type="project" value="UniProtKB-SubCell"/>
</dbReference>
<dbReference type="GO" id="GO:0008650">
    <property type="term" value="F:rRNA (uridine-2'-O-)-methyltransferase activity"/>
    <property type="evidence" value="ECO:0007669"/>
    <property type="project" value="UniProtKB-UniRule"/>
</dbReference>
<dbReference type="CDD" id="cd02440">
    <property type="entry name" value="AdoMet_MTases"/>
    <property type="match status" value="1"/>
</dbReference>
<dbReference type="FunFam" id="3.40.50.150:FF:000005">
    <property type="entry name" value="Ribosomal RNA large subunit methyltransferase E"/>
    <property type="match status" value="1"/>
</dbReference>
<dbReference type="Gene3D" id="3.40.50.150">
    <property type="entry name" value="Vaccinia Virus protein VP39"/>
    <property type="match status" value="1"/>
</dbReference>
<dbReference type="HAMAP" id="MF_01547">
    <property type="entry name" value="RNA_methyltr_E"/>
    <property type="match status" value="1"/>
</dbReference>
<dbReference type="InterPro" id="IPR050082">
    <property type="entry name" value="RNA_methyltr_RlmE"/>
</dbReference>
<dbReference type="InterPro" id="IPR002877">
    <property type="entry name" value="RNA_MeTrfase_FtsJ_dom"/>
</dbReference>
<dbReference type="InterPro" id="IPR015507">
    <property type="entry name" value="rRNA-MeTfrase_E"/>
</dbReference>
<dbReference type="InterPro" id="IPR004512">
    <property type="entry name" value="rRNA_MeTrfase_gammaproteobac"/>
</dbReference>
<dbReference type="InterPro" id="IPR029063">
    <property type="entry name" value="SAM-dependent_MTases_sf"/>
</dbReference>
<dbReference type="NCBIfam" id="NF008390">
    <property type="entry name" value="PRK11188.1"/>
    <property type="match status" value="1"/>
</dbReference>
<dbReference type="NCBIfam" id="TIGR00438">
    <property type="entry name" value="rrmJ"/>
    <property type="match status" value="1"/>
</dbReference>
<dbReference type="PANTHER" id="PTHR10920">
    <property type="entry name" value="RIBOSOMAL RNA METHYLTRANSFERASE"/>
    <property type="match status" value="1"/>
</dbReference>
<dbReference type="PANTHER" id="PTHR10920:SF18">
    <property type="entry name" value="RRNA METHYLTRANSFERASE 2, MITOCHONDRIAL"/>
    <property type="match status" value="1"/>
</dbReference>
<dbReference type="Pfam" id="PF01728">
    <property type="entry name" value="FtsJ"/>
    <property type="match status" value="1"/>
</dbReference>
<dbReference type="PIRSF" id="PIRSF005461">
    <property type="entry name" value="23S_rRNA_mtase"/>
    <property type="match status" value="1"/>
</dbReference>
<dbReference type="SUPFAM" id="SSF53335">
    <property type="entry name" value="S-adenosyl-L-methionine-dependent methyltransferases"/>
    <property type="match status" value="1"/>
</dbReference>
<feature type="chain" id="PRO_0000155536" description="Ribosomal RNA large subunit methyltransferase E">
    <location>
        <begin position="1"/>
        <end position="208"/>
    </location>
</feature>
<feature type="active site" description="Proton acceptor" evidence="1">
    <location>
        <position position="164"/>
    </location>
</feature>
<feature type="binding site" evidence="1">
    <location>
        <position position="63"/>
    </location>
    <ligand>
        <name>S-adenosyl-L-methionine</name>
        <dbReference type="ChEBI" id="CHEBI:59789"/>
    </ligand>
</feature>
<feature type="binding site" evidence="1">
    <location>
        <position position="65"/>
    </location>
    <ligand>
        <name>S-adenosyl-L-methionine</name>
        <dbReference type="ChEBI" id="CHEBI:59789"/>
    </ligand>
</feature>
<feature type="binding site" evidence="1">
    <location>
        <position position="83"/>
    </location>
    <ligand>
        <name>S-adenosyl-L-methionine</name>
        <dbReference type="ChEBI" id="CHEBI:59789"/>
    </ligand>
</feature>
<feature type="binding site" evidence="1">
    <location>
        <position position="99"/>
    </location>
    <ligand>
        <name>S-adenosyl-L-methionine</name>
        <dbReference type="ChEBI" id="CHEBI:59789"/>
    </ligand>
</feature>
<feature type="binding site" evidence="1">
    <location>
        <position position="124"/>
    </location>
    <ligand>
        <name>S-adenosyl-L-methionine</name>
        <dbReference type="ChEBI" id="CHEBI:59789"/>
    </ligand>
</feature>
<keyword id="KW-0963">Cytoplasm</keyword>
<keyword id="KW-0489">Methyltransferase</keyword>
<keyword id="KW-0698">rRNA processing</keyword>
<keyword id="KW-0949">S-adenosyl-L-methionine</keyword>
<keyword id="KW-0808">Transferase</keyword>
<reference key="1">
    <citation type="journal article" date="2005" name="Nucleic Acids Res.">
        <title>The genome sequence of Salmonella enterica serovar Choleraesuis, a highly invasive and resistant zoonotic pathogen.</title>
        <authorList>
            <person name="Chiu C.-H."/>
            <person name="Tang P."/>
            <person name="Chu C."/>
            <person name="Hu S."/>
            <person name="Bao Q."/>
            <person name="Yu J."/>
            <person name="Chou Y.-Y."/>
            <person name="Wang H.-S."/>
            <person name="Lee Y.-S."/>
        </authorList>
    </citation>
    <scope>NUCLEOTIDE SEQUENCE [LARGE SCALE GENOMIC DNA]</scope>
    <source>
        <strain>SC-B67</strain>
    </source>
</reference>
<accession>Q57JH1</accession>
<sequence length="208" mass="23247">MTGKKRSASSSRWLHEHFSDKYVQQAQKKGLRSRAWFKLDEIQQSDKLFKPGMTVVDLGAAPGGWSQYVVTQIGGKGRIIACDLLPMDPIVGVDFLQGDFRDELVMKALLERVGDSKVQVVMSDMAPNMSGTPAVDIPRAMYLVELALEMCRDVLAPGGSFVVKVFQGEGFDEYLREIRSLFTKVKVRKPDSSRARSREVYIVATGRK</sequence>
<gene>
    <name evidence="1" type="primary">rlmE</name>
    <name evidence="1" type="synonym">ftsJ</name>
    <name evidence="1" type="synonym">rrmJ</name>
    <name type="ordered locus">SCH_3235</name>
</gene>
<organism>
    <name type="scientific">Salmonella choleraesuis (strain SC-B67)</name>
    <dbReference type="NCBI Taxonomy" id="321314"/>
    <lineage>
        <taxon>Bacteria</taxon>
        <taxon>Pseudomonadati</taxon>
        <taxon>Pseudomonadota</taxon>
        <taxon>Gammaproteobacteria</taxon>
        <taxon>Enterobacterales</taxon>
        <taxon>Enterobacteriaceae</taxon>
        <taxon>Salmonella</taxon>
    </lineage>
</organism>
<protein>
    <recommendedName>
        <fullName evidence="1">Ribosomal RNA large subunit methyltransferase E</fullName>
        <ecNumber evidence="1">2.1.1.166</ecNumber>
    </recommendedName>
    <alternativeName>
        <fullName evidence="1">23S rRNA Um2552 methyltransferase</fullName>
    </alternativeName>
    <alternativeName>
        <fullName evidence="1">rRNA (uridine-2'-O-)-methyltransferase</fullName>
    </alternativeName>
</protein>
<evidence type="ECO:0000255" key="1">
    <source>
        <dbReference type="HAMAP-Rule" id="MF_01547"/>
    </source>
</evidence>
<comment type="function">
    <text evidence="1">Specifically methylates the uridine in position 2552 of 23S rRNA at the 2'-O position of the ribose in the fully assembled 50S ribosomal subunit.</text>
</comment>
<comment type="catalytic activity">
    <reaction evidence="1">
        <text>uridine(2552) in 23S rRNA + S-adenosyl-L-methionine = 2'-O-methyluridine(2552) in 23S rRNA + S-adenosyl-L-homocysteine + H(+)</text>
        <dbReference type="Rhea" id="RHEA:42720"/>
        <dbReference type="Rhea" id="RHEA-COMP:10202"/>
        <dbReference type="Rhea" id="RHEA-COMP:10203"/>
        <dbReference type="ChEBI" id="CHEBI:15378"/>
        <dbReference type="ChEBI" id="CHEBI:57856"/>
        <dbReference type="ChEBI" id="CHEBI:59789"/>
        <dbReference type="ChEBI" id="CHEBI:65315"/>
        <dbReference type="ChEBI" id="CHEBI:74478"/>
        <dbReference type="EC" id="2.1.1.166"/>
    </reaction>
</comment>
<comment type="subcellular location">
    <subcellularLocation>
        <location evidence="1">Cytoplasm</location>
    </subcellularLocation>
</comment>
<comment type="similarity">
    <text evidence="1">Belongs to the class I-like SAM-binding methyltransferase superfamily. RNA methyltransferase RlmE family.</text>
</comment>
<proteinExistence type="inferred from homology"/>